<accession>Q2KIJ8</accession>
<keyword id="KW-0143">Chaperone</keyword>
<keyword id="KW-0449">Lipoprotein</keyword>
<keyword id="KW-0472">Membrane</keyword>
<keyword id="KW-0564">Palmitate</keyword>
<keyword id="KW-0597">Phosphoprotein</keyword>
<keyword id="KW-1185">Reference proteome</keyword>
<organism>
    <name type="scientific">Bos taurus</name>
    <name type="common">Bovine</name>
    <dbReference type="NCBI Taxonomy" id="9913"/>
    <lineage>
        <taxon>Eukaryota</taxon>
        <taxon>Metazoa</taxon>
        <taxon>Chordata</taxon>
        <taxon>Craniata</taxon>
        <taxon>Vertebrata</taxon>
        <taxon>Euteleostomi</taxon>
        <taxon>Mammalia</taxon>
        <taxon>Eutheria</taxon>
        <taxon>Laurasiatheria</taxon>
        <taxon>Artiodactyla</taxon>
        <taxon>Ruminantia</taxon>
        <taxon>Pecora</taxon>
        <taxon>Bovidae</taxon>
        <taxon>Bovinae</taxon>
        <taxon>Bos</taxon>
    </lineage>
</organism>
<comment type="subunit">
    <text evidence="1">Interacts with the chaperone complex consisting of HSC70 and SGTA.</text>
</comment>
<comment type="subcellular location">
    <subcellularLocation>
        <location evidence="1">Membrane</location>
        <topology evidence="1">Lipid-anchor</topology>
    </subcellularLocation>
</comment>
<comment type="PTM">
    <text evidence="1">Palmitoylated.</text>
</comment>
<reference key="1">
    <citation type="submission" date="2006-01" db="EMBL/GenBank/DDBJ databases">
        <authorList>
            <consortium name="NIH - Mammalian Gene Collection (MGC) project"/>
        </authorList>
    </citation>
    <scope>NUCLEOTIDE SEQUENCE [LARGE SCALE MRNA]</scope>
    <source>
        <strain>Hereford</strain>
        <tissue>Testis</tissue>
    </source>
</reference>
<proteinExistence type="evidence at transcript level"/>
<sequence>MACNIPNQRQRTMSTSGKALYEILGLHKGASNEEIKKTYRKLALKHHPDKNPDDPGAAEKFKEINNAHTILTDMSKRNIYDKYGSLGLYVAEQFGDENVNTYFMLSSWWAKTLFVIIGLLTGCYFCCCLCCCCNCCCGRCWTKSSMPEEDFYVSPEDLEEQIKTDIAKDMDFPVVLQPTNANEKTQLIREEPRSYCTDS</sequence>
<protein>
    <recommendedName>
        <fullName>DnaJ homolog subfamily C member 5B</fullName>
    </recommendedName>
    <alternativeName>
        <fullName>Cysteine string protein beta</fullName>
        <shortName>CSP-beta</shortName>
    </alternativeName>
</protein>
<evidence type="ECO:0000250" key="1"/>
<evidence type="ECO:0000250" key="2">
    <source>
        <dbReference type="UniProtKB" id="D3ZD82"/>
    </source>
</evidence>
<evidence type="ECO:0000255" key="3">
    <source>
        <dbReference type="PROSITE-ProRule" id="PRU00286"/>
    </source>
</evidence>
<feature type="chain" id="PRO_0000290027" description="DnaJ homolog subfamily C member 5B">
    <location>
        <begin position="1"/>
        <end position="199"/>
    </location>
</feature>
<feature type="domain" description="J" evidence="3">
    <location>
        <begin position="19"/>
        <end position="84"/>
    </location>
</feature>
<feature type="modified residue" description="Phosphoserine" evidence="2">
    <location>
        <position position="14"/>
    </location>
</feature>
<feature type="modified residue" description="Phosphoserine" evidence="2">
    <location>
        <position position="16"/>
    </location>
</feature>
<gene>
    <name type="primary">DNAJC5B</name>
</gene>
<name>DNJ5B_BOVIN</name>
<dbReference type="EMBL" id="BC112612">
    <property type="protein sequence ID" value="AAI12613.1"/>
    <property type="molecule type" value="mRNA"/>
</dbReference>
<dbReference type="RefSeq" id="NP_001069334.1">
    <property type="nucleotide sequence ID" value="NM_001075866.2"/>
</dbReference>
<dbReference type="RefSeq" id="XP_024857362.1">
    <property type="nucleotide sequence ID" value="XM_025001594.2"/>
</dbReference>
<dbReference type="RefSeq" id="XP_059749255.1">
    <property type="nucleotide sequence ID" value="XM_059893272.1"/>
</dbReference>
<dbReference type="RefSeq" id="XP_059749256.1">
    <property type="nucleotide sequence ID" value="XM_059893273.1"/>
</dbReference>
<dbReference type="RefSeq" id="XP_059749257.1">
    <property type="nucleotide sequence ID" value="XM_059893274.1"/>
</dbReference>
<dbReference type="SMR" id="Q2KIJ8"/>
<dbReference type="FunCoup" id="Q2KIJ8">
    <property type="interactions" value="172"/>
</dbReference>
<dbReference type="STRING" id="9913.ENSBTAP00000020262"/>
<dbReference type="PaxDb" id="9913-ENSBTAP00000020262"/>
<dbReference type="Ensembl" id="ENSBTAT00000020262.4">
    <property type="protein sequence ID" value="ENSBTAP00000020262.3"/>
    <property type="gene ID" value="ENSBTAG00000015229.4"/>
</dbReference>
<dbReference type="GeneID" id="525222"/>
<dbReference type="KEGG" id="bta:525222"/>
<dbReference type="CTD" id="85479"/>
<dbReference type="VEuPathDB" id="HostDB:ENSBTAG00000015229"/>
<dbReference type="VGNC" id="VGNC:53858">
    <property type="gene designation" value="DNAJC5B"/>
</dbReference>
<dbReference type="eggNOG" id="KOG0716">
    <property type="taxonomic scope" value="Eukaryota"/>
</dbReference>
<dbReference type="GeneTree" id="ENSGT00940000159294"/>
<dbReference type="HOGENOM" id="CLU_017633_14_1_1"/>
<dbReference type="InParanoid" id="Q2KIJ8"/>
<dbReference type="OMA" id="EINKAHT"/>
<dbReference type="OrthoDB" id="445556at2759"/>
<dbReference type="TreeFam" id="TF105164"/>
<dbReference type="Proteomes" id="UP000009136">
    <property type="component" value="Chromosome 14"/>
</dbReference>
<dbReference type="Bgee" id="ENSBTAG00000015229">
    <property type="expression patterns" value="Expressed in semen and 11 other cell types or tissues"/>
</dbReference>
<dbReference type="GO" id="GO:0005737">
    <property type="term" value="C:cytoplasm"/>
    <property type="evidence" value="ECO:0007669"/>
    <property type="project" value="UniProtKB-ARBA"/>
</dbReference>
<dbReference type="GO" id="GO:0016020">
    <property type="term" value="C:membrane"/>
    <property type="evidence" value="ECO:0007669"/>
    <property type="project" value="UniProtKB-SubCell"/>
</dbReference>
<dbReference type="CDD" id="cd06257">
    <property type="entry name" value="DnaJ"/>
    <property type="match status" value="1"/>
</dbReference>
<dbReference type="FunFam" id="1.10.287.110:FF:000017">
    <property type="entry name" value="dnaJ homolog subfamily C member 5"/>
    <property type="match status" value="1"/>
</dbReference>
<dbReference type="Gene3D" id="1.10.287.110">
    <property type="entry name" value="DnaJ domain"/>
    <property type="match status" value="1"/>
</dbReference>
<dbReference type="InterPro" id="IPR051434">
    <property type="entry name" value="DnaJ_C_subfamily_member5"/>
</dbReference>
<dbReference type="InterPro" id="IPR001623">
    <property type="entry name" value="DnaJ_domain"/>
</dbReference>
<dbReference type="InterPro" id="IPR036869">
    <property type="entry name" value="J_dom_sf"/>
</dbReference>
<dbReference type="PANTHER" id="PTHR44027">
    <property type="entry name" value="DNAJ HOMOLOG SUBFAMILY C MEMBER 5 HOMOLOG"/>
    <property type="match status" value="1"/>
</dbReference>
<dbReference type="PANTHER" id="PTHR44027:SF6">
    <property type="entry name" value="DNAJ HOMOLOG SUBFAMILY C MEMBER 5B"/>
    <property type="match status" value="1"/>
</dbReference>
<dbReference type="Pfam" id="PF00226">
    <property type="entry name" value="DnaJ"/>
    <property type="match status" value="1"/>
</dbReference>
<dbReference type="PRINTS" id="PR00625">
    <property type="entry name" value="JDOMAIN"/>
</dbReference>
<dbReference type="SMART" id="SM00271">
    <property type="entry name" value="DnaJ"/>
    <property type="match status" value="1"/>
</dbReference>
<dbReference type="SUPFAM" id="SSF46565">
    <property type="entry name" value="Chaperone J-domain"/>
    <property type="match status" value="1"/>
</dbReference>
<dbReference type="PROSITE" id="PS50076">
    <property type="entry name" value="DNAJ_2"/>
    <property type="match status" value="1"/>
</dbReference>